<name>FA32A_PONAB</name>
<accession>Q5R9E5</accession>
<evidence type="ECO:0000250" key="1"/>
<evidence type="ECO:0000256" key="2">
    <source>
        <dbReference type="SAM" id="MobiDB-lite"/>
    </source>
</evidence>
<evidence type="ECO:0000305" key="3"/>
<protein>
    <recommendedName>
        <fullName>Protein FAM32A</fullName>
    </recommendedName>
    <alternativeName>
        <fullName>Ovarian tumor associated gene 12</fullName>
        <shortName>OTAG-12</shortName>
    </alternativeName>
</protein>
<comment type="function">
    <text evidence="1">May induce G2 arrest and apoptosis. May also increase cell sensitivity to apoptotic stimuli.</text>
</comment>
<comment type="subcellular location">
    <subcellularLocation>
        <location evidence="1">Nucleus</location>
    </subcellularLocation>
</comment>
<comment type="similarity">
    <text evidence="3">Belongs to the FAM32 family.</text>
</comment>
<gene>
    <name type="primary">FAM32A</name>
    <name type="synonym">OTAG12</name>
</gene>
<proteinExistence type="inferred from homology"/>
<sequence>MEAYEQVQKGPLKLKGVAELGVTKRKKKKKDKDKAKLLEAMGTSKKNEEEKRRGLDKRTPAQAAFEKMQEKRQMERILKKASKTHKQRVEDFNRHLDTLTEHYDIPKVSWTK</sequence>
<feature type="chain" id="PRO_0000223252" description="Protein FAM32A">
    <location>
        <begin position="1"/>
        <end position="112"/>
    </location>
</feature>
<feature type="region of interest" description="Disordered" evidence="2">
    <location>
        <begin position="23"/>
        <end position="58"/>
    </location>
</feature>
<feature type="compositionally biased region" description="Basic and acidic residues" evidence="2">
    <location>
        <begin position="45"/>
        <end position="58"/>
    </location>
</feature>
<reference key="1">
    <citation type="submission" date="2004-11" db="EMBL/GenBank/DDBJ databases">
        <authorList>
            <consortium name="The German cDNA consortium"/>
        </authorList>
    </citation>
    <scope>NUCLEOTIDE SEQUENCE [LARGE SCALE MRNA]</scope>
    <source>
        <tissue>Heart</tissue>
    </source>
</reference>
<organism>
    <name type="scientific">Pongo abelii</name>
    <name type="common">Sumatran orangutan</name>
    <name type="synonym">Pongo pygmaeus abelii</name>
    <dbReference type="NCBI Taxonomy" id="9601"/>
    <lineage>
        <taxon>Eukaryota</taxon>
        <taxon>Metazoa</taxon>
        <taxon>Chordata</taxon>
        <taxon>Craniata</taxon>
        <taxon>Vertebrata</taxon>
        <taxon>Euteleostomi</taxon>
        <taxon>Mammalia</taxon>
        <taxon>Eutheria</taxon>
        <taxon>Euarchontoglires</taxon>
        <taxon>Primates</taxon>
        <taxon>Haplorrhini</taxon>
        <taxon>Catarrhini</taxon>
        <taxon>Hominidae</taxon>
        <taxon>Pongo</taxon>
    </lineage>
</organism>
<dbReference type="EMBL" id="CR859444">
    <property type="protein sequence ID" value="CAH91615.1"/>
    <property type="molecule type" value="mRNA"/>
</dbReference>
<dbReference type="RefSeq" id="NP_001127442.1">
    <property type="nucleotide sequence ID" value="NM_001133970.1"/>
</dbReference>
<dbReference type="SMR" id="Q5R9E5"/>
<dbReference type="FunCoup" id="Q5R9E5">
    <property type="interactions" value="1605"/>
</dbReference>
<dbReference type="STRING" id="9601.ENSPPYP00000010856"/>
<dbReference type="Ensembl" id="ENSPPYT00000035416.1">
    <property type="protein sequence ID" value="ENSPPYP00000025650.1"/>
    <property type="gene ID" value="ENSPPYG00000036075.1"/>
</dbReference>
<dbReference type="GeneID" id="100174513"/>
<dbReference type="KEGG" id="pon:100174513"/>
<dbReference type="CTD" id="26017"/>
<dbReference type="eggNOG" id="KOG0937">
    <property type="taxonomic scope" value="Eukaryota"/>
</dbReference>
<dbReference type="eggNOG" id="KOG3410">
    <property type="taxonomic scope" value="Eukaryota"/>
</dbReference>
<dbReference type="GeneTree" id="ENSGT00390000013811"/>
<dbReference type="InParanoid" id="Q5R9E5"/>
<dbReference type="OMA" id="QLSEHHD"/>
<dbReference type="OrthoDB" id="205403at2759"/>
<dbReference type="Proteomes" id="UP000001595">
    <property type="component" value="Chromosome 19"/>
</dbReference>
<dbReference type="GO" id="GO:0005730">
    <property type="term" value="C:nucleolus"/>
    <property type="evidence" value="ECO:0007669"/>
    <property type="project" value="Ensembl"/>
</dbReference>
<dbReference type="GO" id="GO:0005654">
    <property type="term" value="C:nucleoplasm"/>
    <property type="evidence" value="ECO:0007669"/>
    <property type="project" value="Ensembl"/>
</dbReference>
<dbReference type="GO" id="GO:0006915">
    <property type="term" value="P:apoptotic process"/>
    <property type="evidence" value="ECO:0007669"/>
    <property type="project" value="UniProtKB-KW"/>
</dbReference>
<dbReference type="InterPro" id="IPR013865">
    <property type="entry name" value="FAM32A"/>
</dbReference>
<dbReference type="PANTHER" id="PTHR13282">
    <property type="entry name" value="PROTEIN FAM32A"/>
    <property type="match status" value="1"/>
</dbReference>
<dbReference type="PANTHER" id="PTHR13282:SF6">
    <property type="entry name" value="PROTEIN FAM32A"/>
    <property type="match status" value="1"/>
</dbReference>
<dbReference type="Pfam" id="PF08555">
    <property type="entry name" value="FAM32A"/>
    <property type="match status" value="1"/>
</dbReference>
<keyword id="KW-0053">Apoptosis</keyword>
<keyword id="KW-0131">Cell cycle</keyword>
<keyword id="KW-0539">Nucleus</keyword>
<keyword id="KW-1185">Reference proteome</keyword>